<gene>
    <name type="ordered locus">stu1838</name>
</gene>
<protein>
    <recommendedName>
        <fullName evidence="1">N-acetyldiaminopimelate deacetylase</fullName>
        <ecNumber evidence="1">3.5.1.47</ecNumber>
    </recommendedName>
</protein>
<sequence>MTLDLIKIRRDLHQIPEIGLEEFKTQAYLLERIAEMTEGKDFVEQRTWRTGILVFLHGSAPEKTIGWRTDIDGLPIVEETGLDFKSIHEGRMHACGHDIHMTTALGLLDQMLQVQPKNNMLFLFQPAEENEAGGMLMYEDGAFGDWLPDEFYGLHVRPDFKVGDIATNTNTLFAGTCEVLVTFKGKGGHAAFPHEANDALVAASYFITQVQTIVSRNVDPIQGGVVTFGSFHAGTTNNVIAETAEVYGTIRTLTQEMSLLIQKRVRQIAEGVAASFGMEVDIMLKQGGYLPVENNPALAKELMAFFDASPAVNLIDCLPAMTGEDFGYLLSKVPGVMFWLGIDTPYALHHPKMSPNEEALAFAVSEIGKFLKYKAED</sequence>
<proteinExistence type="inferred from homology"/>
<accession>Q5M2I5</accession>
<reference key="1">
    <citation type="journal article" date="2004" name="Nat. Biotechnol.">
        <title>Complete sequence and comparative genome analysis of the dairy bacterium Streptococcus thermophilus.</title>
        <authorList>
            <person name="Bolotin A."/>
            <person name="Quinquis B."/>
            <person name="Renault P."/>
            <person name="Sorokin A."/>
            <person name="Ehrlich S.D."/>
            <person name="Kulakauskas S."/>
            <person name="Lapidus A."/>
            <person name="Goltsman E."/>
            <person name="Mazur M."/>
            <person name="Pusch G.D."/>
            <person name="Fonstein M."/>
            <person name="Overbeek R."/>
            <person name="Kyprides N."/>
            <person name="Purnelle B."/>
            <person name="Prozzi D."/>
            <person name="Ngui K."/>
            <person name="Masuy D."/>
            <person name="Hancy F."/>
            <person name="Burteau S."/>
            <person name="Boutry M."/>
            <person name="Delcour J."/>
            <person name="Goffeau A."/>
            <person name="Hols P."/>
        </authorList>
    </citation>
    <scope>NUCLEOTIDE SEQUENCE [LARGE SCALE GENOMIC DNA]</scope>
    <source>
        <strain>ATCC BAA-250 / LMG 18311</strain>
    </source>
</reference>
<name>DAPEL_STRT2</name>
<keyword id="KW-0028">Amino-acid biosynthesis</keyword>
<keyword id="KW-0220">Diaminopimelate biosynthesis</keyword>
<keyword id="KW-0378">Hydrolase</keyword>
<keyword id="KW-0457">Lysine biosynthesis</keyword>
<keyword id="KW-1185">Reference proteome</keyword>
<organism>
    <name type="scientific">Streptococcus thermophilus (strain ATCC BAA-250 / LMG 18311)</name>
    <dbReference type="NCBI Taxonomy" id="264199"/>
    <lineage>
        <taxon>Bacteria</taxon>
        <taxon>Bacillati</taxon>
        <taxon>Bacillota</taxon>
        <taxon>Bacilli</taxon>
        <taxon>Lactobacillales</taxon>
        <taxon>Streptococcaceae</taxon>
        <taxon>Streptococcus</taxon>
    </lineage>
</organism>
<feature type="chain" id="PRO_0000376792" description="N-acetyldiaminopimelate deacetylase">
    <location>
        <begin position="1"/>
        <end position="377"/>
    </location>
</feature>
<feature type="active site" evidence="1">
    <location>
        <position position="70"/>
    </location>
</feature>
<feature type="active site" description="Proton acceptor" evidence="1">
    <location>
        <position position="129"/>
    </location>
</feature>
<comment type="function">
    <text evidence="1">Catalyzes the conversion of N-acetyl-diaminopimelate to diaminopimelate and acetate.</text>
</comment>
<comment type="catalytic activity">
    <reaction evidence="1">
        <text>N-acetyl-(2S,6S)-2,6-diaminopimelate + H2O = (2S,6S)-2,6-diaminopimelate + acetate</text>
        <dbReference type="Rhea" id="RHEA:20405"/>
        <dbReference type="ChEBI" id="CHEBI:15377"/>
        <dbReference type="ChEBI" id="CHEBI:30089"/>
        <dbReference type="ChEBI" id="CHEBI:57609"/>
        <dbReference type="ChEBI" id="CHEBI:58767"/>
        <dbReference type="EC" id="3.5.1.47"/>
    </reaction>
</comment>
<comment type="pathway">
    <text evidence="1">Amino-acid biosynthesis; L-lysine biosynthesis via DAP pathway; LL-2,6-diaminopimelate from (S)-tetrahydrodipicolinate (acetylase route): step 3/3.</text>
</comment>
<comment type="similarity">
    <text evidence="1">Belongs to the peptidase M20A family. N-acetyldiaminopimelate deacetylase subfamily.</text>
</comment>
<evidence type="ECO:0000255" key="1">
    <source>
        <dbReference type="HAMAP-Rule" id="MF_01692"/>
    </source>
</evidence>
<dbReference type="EC" id="3.5.1.47" evidence="1"/>
<dbReference type="EMBL" id="CP000023">
    <property type="protein sequence ID" value="AAV61437.1"/>
    <property type="molecule type" value="Genomic_DNA"/>
</dbReference>
<dbReference type="RefSeq" id="WP_002951995.1">
    <property type="nucleotide sequence ID" value="NC_006448.1"/>
</dbReference>
<dbReference type="SMR" id="Q5M2I5"/>
<dbReference type="STRING" id="264199.stu1838"/>
<dbReference type="KEGG" id="stl:stu1838"/>
<dbReference type="PATRIC" id="fig|264199.4.peg.1818"/>
<dbReference type="eggNOG" id="COG1473">
    <property type="taxonomic scope" value="Bacteria"/>
</dbReference>
<dbReference type="HOGENOM" id="CLU_023257_0_1_9"/>
<dbReference type="UniPathway" id="UPA00034">
    <property type="reaction ID" value="UER00024"/>
</dbReference>
<dbReference type="Proteomes" id="UP000001170">
    <property type="component" value="Chromosome"/>
</dbReference>
<dbReference type="GO" id="GO:0050118">
    <property type="term" value="F:N-acetyldiaminopimelate deacetylase activity"/>
    <property type="evidence" value="ECO:0007669"/>
    <property type="project" value="UniProtKB-UniRule"/>
</dbReference>
<dbReference type="GO" id="GO:0019877">
    <property type="term" value="P:diaminopimelate biosynthetic process"/>
    <property type="evidence" value="ECO:0007669"/>
    <property type="project" value="UniProtKB-UniRule"/>
</dbReference>
<dbReference type="GO" id="GO:0009089">
    <property type="term" value="P:lysine biosynthetic process via diaminopimelate"/>
    <property type="evidence" value="ECO:0007669"/>
    <property type="project" value="UniProtKB-UniRule"/>
</dbReference>
<dbReference type="CDD" id="cd05670">
    <property type="entry name" value="M20_Acy1_YkuR-like"/>
    <property type="match status" value="1"/>
</dbReference>
<dbReference type="FunFam" id="3.30.70.360:FF:000001">
    <property type="entry name" value="N-acetyldiaminopimelate deacetylase"/>
    <property type="match status" value="1"/>
</dbReference>
<dbReference type="Gene3D" id="3.30.70.360">
    <property type="match status" value="1"/>
</dbReference>
<dbReference type="Gene3D" id="3.40.630.10">
    <property type="entry name" value="Zn peptidases"/>
    <property type="match status" value="1"/>
</dbReference>
<dbReference type="HAMAP" id="MF_01692">
    <property type="entry name" value="DapEL"/>
    <property type="match status" value="1"/>
</dbReference>
<dbReference type="InterPro" id="IPR023905">
    <property type="entry name" value="AcetylDAP_deacetylase"/>
</dbReference>
<dbReference type="InterPro" id="IPR017439">
    <property type="entry name" value="Amidohydrolase"/>
</dbReference>
<dbReference type="InterPro" id="IPR036264">
    <property type="entry name" value="Bact_exopeptidase_dim_dom"/>
</dbReference>
<dbReference type="InterPro" id="IPR002933">
    <property type="entry name" value="Peptidase_M20"/>
</dbReference>
<dbReference type="InterPro" id="IPR011650">
    <property type="entry name" value="Peptidase_M20_dimer"/>
</dbReference>
<dbReference type="NCBIfam" id="TIGR01891">
    <property type="entry name" value="amidohydrolases"/>
    <property type="match status" value="1"/>
</dbReference>
<dbReference type="PANTHER" id="PTHR11014:SF98">
    <property type="entry name" value="N-ACETYLDIAMINOPIMELATE DEACETYLASE"/>
    <property type="match status" value="1"/>
</dbReference>
<dbReference type="PANTHER" id="PTHR11014">
    <property type="entry name" value="PEPTIDASE M20 FAMILY MEMBER"/>
    <property type="match status" value="1"/>
</dbReference>
<dbReference type="Pfam" id="PF07687">
    <property type="entry name" value="M20_dimer"/>
    <property type="match status" value="1"/>
</dbReference>
<dbReference type="Pfam" id="PF01546">
    <property type="entry name" value="Peptidase_M20"/>
    <property type="match status" value="1"/>
</dbReference>
<dbReference type="PIRSF" id="PIRSF005962">
    <property type="entry name" value="Pept_M20D_amidohydro"/>
    <property type="match status" value="1"/>
</dbReference>
<dbReference type="SUPFAM" id="SSF55031">
    <property type="entry name" value="Bacterial exopeptidase dimerisation domain"/>
    <property type="match status" value="1"/>
</dbReference>
<dbReference type="SUPFAM" id="SSF53187">
    <property type="entry name" value="Zn-dependent exopeptidases"/>
    <property type="match status" value="1"/>
</dbReference>